<reference key="1">
    <citation type="journal article" date="1997" name="Yeast">
        <title>The sequence of a 36.7 kb segment on the left arm of chromosome IV from Saccharomyces cerevisiae reveals 20 non-overlapping open reading frames (ORFs) including SIT4, FAD1, NAM1, RNA11, SIR2, NAT1, PRP9, ACT2 and MPS1 and 11 new ORFs.</title>
        <authorList>
            <person name="Saren A.-M."/>
            <person name="Laamanen P."/>
            <person name="Lejarcegui J.B."/>
            <person name="Paulin L."/>
        </authorList>
    </citation>
    <scope>NUCLEOTIDE SEQUENCE [GENOMIC DNA]</scope>
    <source>
        <strain>ATCC 204508 / S288c</strain>
    </source>
</reference>
<reference key="2">
    <citation type="journal article" date="1997" name="Nature">
        <title>The nucleotide sequence of Saccharomyces cerevisiae chromosome IV.</title>
        <authorList>
            <person name="Jacq C."/>
            <person name="Alt-Moerbe J."/>
            <person name="Andre B."/>
            <person name="Arnold W."/>
            <person name="Bahr A."/>
            <person name="Ballesta J.P.G."/>
            <person name="Bargues M."/>
            <person name="Baron L."/>
            <person name="Becker A."/>
            <person name="Biteau N."/>
            <person name="Bloecker H."/>
            <person name="Blugeon C."/>
            <person name="Boskovic J."/>
            <person name="Brandt P."/>
            <person name="Brueckner M."/>
            <person name="Buitrago M.J."/>
            <person name="Coster F."/>
            <person name="Delaveau T."/>
            <person name="del Rey F."/>
            <person name="Dujon B."/>
            <person name="Eide L.G."/>
            <person name="Garcia-Cantalejo J.M."/>
            <person name="Goffeau A."/>
            <person name="Gomez-Peris A."/>
            <person name="Granotier C."/>
            <person name="Hanemann V."/>
            <person name="Hankeln T."/>
            <person name="Hoheisel J.D."/>
            <person name="Jaeger W."/>
            <person name="Jimenez A."/>
            <person name="Jonniaux J.-L."/>
            <person name="Kraemer C."/>
            <person name="Kuester H."/>
            <person name="Laamanen P."/>
            <person name="Legros Y."/>
            <person name="Louis E.J."/>
            <person name="Moeller-Rieker S."/>
            <person name="Monnet A."/>
            <person name="Moro M."/>
            <person name="Mueller-Auer S."/>
            <person name="Nussbaumer B."/>
            <person name="Paricio N."/>
            <person name="Paulin L."/>
            <person name="Perea J."/>
            <person name="Perez-Alonso M."/>
            <person name="Perez-Ortin J.E."/>
            <person name="Pohl T.M."/>
            <person name="Prydz H."/>
            <person name="Purnelle B."/>
            <person name="Rasmussen S.W."/>
            <person name="Remacha M.A."/>
            <person name="Revuelta J.L."/>
            <person name="Rieger M."/>
            <person name="Salom D."/>
            <person name="Saluz H.P."/>
            <person name="Saiz J.E."/>
            <person name="Saren A.-M."/>
            <person name="Schaefer M."/>
            <person name="Scharfe M."/>
            <person name="Schmidt E.R."/>
            <person name="Schneider C."/>
            <person name="Scholler P."/>
            <person name="Schwarz S."/>
            <person name="Soler-Mira A."/>
            <person name="Urrestarazu L.A."/>
            <person name="Verhasselt P."/>
            <person name="Vissers S."/>
            <person name="Voet M."/>
            <person name="Volckaert G."/>
            <person name="Wagner G."/>
            <person name="Wambutt R."/>
            <person name="Wedler E."/>
            <person name="Wedler H."/>
            <person name="Woelfl S."/>
            <person name="Harris D.E."/>
            <person name="Bowman S."/>
            <person name="Brown D."/>
            <person name="Churcher C.M."/>
            <person name="Connor R."/>
            <person name="Dedman K."/>
            <person name="Gentles S."/>
            <person name="Hamlin N."/>
            <person name="Hunt S."/>
            <person name="Jones L."/>
            <person name="McDonald S."/>
            <person name="Murphy L.D."/>
            <person name="Niblett D."/>
            <person name="Odell C."/>
            <person name="Oliver K."/>
            <person name="Rajandream M.A."/>
            <person name="Richards C."/>
            <person name="Shore L."/>
            <person name="Walsh S.V."/>
            <person name="Barrell B.G."/>
            <person name="Dietrich F.S."/>
            <person name="Mulligan J.T."/>
            <person name="Allen E."/>
            <person name="Araujo R."/>
            <person name="Aviles E."/>
            <person name="Berno A."/>
            <person name="Carpenter J."/>
            <person name="Chen E."/>
            <person name="Cherry J.M."/>
            <person name="Chung E."/>
            <person name="Duncan M."/>
            <person name="Hunicke-Smith S."/>
            <person name="Hyman R.W."/>
            <person name="Komp C."/>
            <person name="Lashkari D."/>
            <person name="Lew H."/>
            <person name="Lin D."/>
            <person name="Mosedale D."/>
            <person name="Nakahara K."/>
            <person name="Namath A."/>
            <person name="Oefner P."/>
            <person name="Oh C."/>
            <person name="Petel F.X."/>
            <person name="Roberts D."/>
            <person name="Schramm S."/>
            <person name="Schroeder M."/>
            <person name="Shogren T."/>
            <person name="Shroff N."/>
            <person name="Winant A."/>
            <person name="Yelton M.A."/>
            <person name="Botstein D."/>
            <person name="Davis R.W."/>
            <person name="Johnston M."/>
            <person name="Andrews S."/>
            <person name="Brinkman R."/>
            <person name="Cooper J."/>
            <person name="Ding H."/>
            <person name="Du Z."/>
            <person name="Favello A."/>
            <person name="Fulton L."/>
            <person name="Gattung S."/>
            <person name="Greco T."/>
            <person name="Hallsworth K."/>
            <person name="Hawkins J."/>
            <person name="Hillier L.W."/>
            <person name="Jier M."/>
            <person name="Johnson D."/>
            <person name="Johnston L."/>
            <person name="Kirsten J."/>
            <person name="Kucaba T."/>
            <person name="Langston Y."/>
            <person name="Latreille P."/>
            <person name="Le T."/>
            <person name="Mardis E."/>
            <person name="Menezes S."/>
            <person name="Miller N."/>
            <person name="Nhan M."/>
            <person name="Pauley A."/>
            <person name="Peluso D."/>
            <person name="Rifkin L."/>
            <person name="Riles L."/>
            <person name="Taich A."/>
            <person name="Trevaskis E."/>
            <person name="Vignati D."/>
            <person name="Wilcox L."/>
            <person name="Wohldman P."/>
            <person name="Vaudin M."/>
            <person name="Wilson R."/>
            <person name="Waterston R."/>
            <person name="Albermann K."/>
            <person name="Hani J."/>
            <person name="Heumann K."/>
            <person name="Kleine K."/>
            <person name="Mewes H.-W."/>
            <person name="Zollner A."/>
            <person name="Zaccaria P."/>
        </authorList>
    </citation>
    <scope>NUCLEOTIDE SEQUENCE [LARGE SCALE GENOMIC DNA]</scope>
    <source>
        <strain>ATCC 204508 / S288c</strain>
    </source>
</reference>
<reference key="3">
    <citation type="journal article" date="2014" name="G3 (Bethesda)">
        <title>The reference genome sequence of Saccharomyces cerevisiae: Then and now.</title>
        <authorList>
            <person name="Engel S.R."/>
            <person name="Dietrich F.S."/>
            <person name="Fisk D.G."/>
            <person name="Binkley G."/>
            <person name="Balakrishnan R."/>
            <person name="Costanzo M.C."/>
            <person name="Dwight S.S."/>
            <person name="Hitz B.C."/>
            <person name="Karra K."/>
            <person name="Nash R.S."/>
            <person name="Weng S."/>
            <person name="Wong E.D."/>
            <person name="Lloyd P."/>
            <person name="Skrzypek M.S."/>
            <person name="Miyasato S.R."/>
            <person name="Simison M."/>
            <person name="Cherry J.M."/>
        </authorList>
    </citation>
    <scope>GENOME REANNOTATION</scope>
    <scope>SEQUENCE REVISION TO 733-741; 746 AND 764</scope>
    <source>
        <strain>ATCC 204508 / S288c</strain>
    </source>
</reference>
<reference key="4">
    <citation type="journal article" date="2000" name="Nucleic Acids Res.">
        <title>Dbp10p, a putative RNA helicase from Saccharomyces cerevisiae, is required for ribosome biogenesis.</title>
        <authorList>
            <person name="Burger F."/>
            <person name="Daugeron M.-C."/>
            <person name="Linder P."/>
        </authorList>
    </citation>
    <scope>FUNCTION</scope>
    <scope>SUBCELLULAR LOCATION</scope>
</reference>
<reference key="5">
    <citation type="journal article" date="2004" name="RNA">
        <title>Role of the yeast Rrp1 protein in the dynamics of pre-ribosome maturation.</title>
        <authorList>
            <person name="Horsey E.W."/>
            <person name="Jakovljevic J."/>
            <person name="Miles T.D."/>
            <person name="Harnpicharnchai P."/>
            <person name="Woolford J.L. Jr."/>
        </authorList>
    </citation>
    <scope>INTERACTION WITH RRP1</scope>
    <scope>IDENTIFICATION BY MASS SPECTROMETRY</scope>
</reference>
<reference key="6">
    <citation type="journal article" date="2007" name="J. Proteome Res.">
        <title>Large-scale phosphorylation analysis of alpha-factor-arrested Saccharomyces cerevisiae.</title>
        <authorList>
            <person name="Li X."/>
            <person name="Gerber S.A."/>
            <person name="Rudner A.D."/>
            <person name="Beausoleil S.A."/>
            <person name="Haas W."/>
            <person name="Villen J."/>
            <person name="Elias J.E."/>
            <person name="Gygi S.P."/>
        </authorList>
    </citation>
    <scope>PHOSPHORYLATION [LARGE SCALE ANALYSIS] AT SER-101</scope>
    <scope>IDENTIFICATION BY MASS SPECTROMETRY [LARGE SCALE ANALYSIS]</scope>
    <source>
        <strain>ADR376</strain>
    </source>
</reference>
<reference key="7">
    <citation type="journal article" date="2008" name="Mol. Cell. Proteomics">
        <title>A multidimensional chromatography technology for in-depth phosphoproteome analysis.</title>
        <authorList>
            <person name="Albuquerque C.P."/>
            <person name="Smolka M.B."/>
            <person name="Payne S.H."/>
            <person name="Bafna V."/>
            <person name="Eng J."/>
            <person name="Zhou H."/>
        </authorList>
    </citation>
    <scope>PHOSPHORYLATION [LARGE SCALE ANALYSIS] AT SER-101; SER-398 AND SER-400</scope>
    <scope>IDENTIFICATION BY MASS SPECTROMETRY [LARGE SCALE ANALYSIS]</scope>
</reference>
<reference key="8">
    <citation type="journal article" date="2009" name="Science">
        <title>Global analysis of Cdk1 substrate phosphorylation sites provides insights into evolution.</title>
        <authorList>
            <person name="Holt L.J."/>
            <person name="Tuch B.B."/>
            <person name="Villen J."/>
            <person name="Johnson A.D."/>
            <person name="Gygi S.P."/>
            <person name="Morgan D.O."/>
        </authorList>
    </citation>
    <scope>PHOSPHORYLATION [LARGE SCALE ANALYSIS] AT SER-101</scope>
    <scope>IDENTIFICATION BY MASS SPECTROMETRY [LARGE SCALE ANALYSIS]</scope>
</reference>
<proteinExistence type="evidence at protein level"/>
<keyword id="KW-0002">3D-structure</keyword>
<keyword id="KW-0067">ATP-binding</keyword>
<keyword id="KW-0347">Helicase</keyword>
<keyword id="KW-0378">Hydrolase</keyword>
<keyword id="KW-0547">Nucleotide-binding</keyword>
<keyword id="KW-0539">Nucleus</keyword>
<keyword id="KW-0597">Phosphoprotein</keyword>
<keyword id="KW-1185">Reference proteome</keyword>
<keyword id="KW-0690">Ribosome biogenesis</keyword>
<keyword id="KW-0694">RNA-binding</keyword>
<keyword id="KW-0698">rRNA processing</keyword>
<name>DBP10_YEAST</name>
<accession>Q12389</accession>
<accession>D6VRW1</accession>
<protein>
    <recommendedName>
        <fullName>ATP-dependent RNA helicase DBP10</fullName>
        <ecNumber>3.6.4.13</ecNumber>
    </recommendedName>
    <alternativeName>
        <fullName>DEAD box protein 10</fullName>
    </alternativeName>
</protein>
<evidence type="ECO:0000255" key="1">
    <source>
        <dbReference type="PROSITE-ProRule" id="PRU00541"/>
    </source>
</evidence>
<evidence type="ECO:0000255" key="2">
    <source>
        <dbReference type="PROSITE-ProRule" id="PRU00542"/>
    </source>
</evidence>
<evidence type="ECO:0000256" key="3">
    <source>
        <dbReference type="SAM" id="MobiDB-lite"/>
    </source>
</evidence>
<evidence type="ECO:0000269" key="4">
    <source>
    </source>
</evidence>
<evidence type="ECO:0000269" key="5">
    <source>
    </source>
</evidence>
<evidence type="ECO:0000305" key="6"/>
<evidence type="ECO:0007744" key="7">
    <source>
    </source>
</evidence>
<evidence type="ECO:0007744" key="8">
    <source>
    </source>
</evidence>
<evidence type="ECO:0007744" key="9">
    <source>
    </source>
</evidence>
<organism>
    <name type="scientific">Saccharomyces cerevisiae (strain ATCC 204508 / S288c)</name>
    <name type="common">Baker's yeast</name>
    <dbReference type="NCBI Taxonomy" id="559292"/>
    <lineage>
        <taxon>Eukaryota</taxon>
        <taxon>Fungi</taxon>
        <taxon>Dikarya</taxon>
        <taxon>Ascomycota</taxon>
        <taxon>Saccharomycotina</taxon>
        <taxon>Saccharomycetes</taxon>
        <taxon>Saccharomycetales</taxon>
        <taxon>Saccharomycetaceae</taxon>
        <taxon>Saccharomyces</taxon>
    </lineage>
</organism>
<gene>
    <name type="primary">DBP10</name>
    <name type="ordered locus">YDL031W</name>
    <name type="ORF">D2770</name>
</gene>
<sequence>MAGVQKRKRDLEDQDDNGSEEDDIAFDIANEIALNDSESDANDSDSEVEADYGPNDVQDVIEYSSDEEEGVNNKKKAENKDIKKKKNSKKEIAAFPMLEMSDDENNASGKTQTGDDEDDVNEYFSTNNLEKTKHKKGSFPSFGLSKIVLNNIKRKGFRQPTPIQRKTIPLILQSRDIVGMARTGSGKTAAFILPMVEKLKSHSGKIGARAVILSPSRELAMQTFNVFKDFARGTELRSVLLTGGDSLEEQFGMMMTNPDVIIATPGRFLHLKVEMNLDLKSVEYVVFDEADRLFEMGFQEQLNELLASLPTTRQTLLFSATLPNSLVDFVKAGLVNPVLVRLDAETKVSENLEMLFLSSKNADREANLLYILQEIIKIPLATSEQLQKLQNSNNEADSDSDDENDRQKKRRNFKKEKFRKQKMPAANELPSEKATILFVPTRHHVEYISQLLRDCGYLISYIYGTLDQHARKRQLYNFRAGLTSILVVTDVAARGVDIPMLANVINYTLPGSSKIFVHRVGRTARAGNKGWAYSIVAENELPYLLDLELFLGKKILLTPMYDSLVDVMKKRWIDEGKPEYQFQPPKLSYTKRLVLGSCPRLDVEGLGDLYKNLMSSNFDLQLAKKTAMKAEKLYYRTRTSASPESLKRSKEIISSGWDAQNAFFGKNEEKEKLDFLAKLQNRRNKETVFEFTRNPDDEMAVFMKRRRKQLAPIQRKATERRELLEKERMAGLSHSIEDEILKGDDGETGYTVSEDALKEFEDADQLLEAQENENKKKKKPKSFKDPTFFLSHYAPAGDIQDKQLQITNGFANDAAQAAYDLNSDDKVQVHKQTATVKWDKKRKKYVNTQGIDNKKYIIGESGQKIAASFRSGRFDDWSKARNLKPLKVGSRETSIPSNLLEDPSQGPAANGRTVRGKFKHKQMKAPKMPDKHRDNYYSQKKKVEKALQSGISVKGYNNAPGLRSELKSTEQIRKDRIIAEKKRAKNARPSKKRKF</sequence>
<comment type="function">
    <text evidence="4">ATP-binding RNA helicase involved in the biogenesis of 60S ribosomal subunits and is required for the normal formation of 25S and 5.8S rRNAs.</text>
</comment>
<comment type="catalytic activity">
    <reaction>
        <text>ATP + H2O = ADP + phosphate + H(+)</text>
        <dbReference type="Rhea" id="RHEA:13065"/>
        <dbReference type="ChEBI" id="CHEBI:15377"/>
        <dbReference type="ChEBI" id="CHEBI:15378"/>
        <dbReference type="ChEBI" id="CHEBI:30616"/>
        <dbReference type="ChEBI" id="CHEBI:43474"/>
        <dbReference type="ChEBI" id="CHEBI:456216"/>
        <dbReference type="EC" id="3.6.4.13"/>
    </reaction>
</comment>
<comment type="subunit">
    <text evidence="5">Interacts with RRP1 and associates with pre-ribosomal particles.</text>
</comment>
<comment type="interaction">
    <interactant intactId="EBI-5644">
        <id>Q12389</id>
    </interactant>
    <interactant intactId="EBI-5644">
        <id>Q12389</id>
        <label>DBP10</label>
    </interactant>
    <organismsDiffer>false</organismsDiffer>
    <experiments>3</experiments>
</comment>
<comment type="interaction">
    <interactant intactId="EBI-5644">
        <id>Q12389</id>
    </interactant>
    <interactant intactId="EBI-6170">
        <id>P32892</id>
        <label>DRS1</label>
    </interactant>
    <organismsDiffer>false</organismsDiffer>
    <experiments>5</experiments>
</comment>
<comment type="interaction">
    <interactant intactId="EBI-5644">
        <id>Q12389</id>
    </interactant>
    <interactant intactId="EBI-6289">
        <id>P36049</id>
        <label>EBP2</label>
    </interactant>
    <organismsDiffer>false</organismsDiffer>
    <experiments>4</experiments>
</comment>
<comment type="interaction">
    <interactant intactId="EBI-5644">
        <id>Q12389</id>
    </interactant>
    <interactant intactId="EBI-28098">
        <id>Q04660</id>
        <label>ERB1</label>
    </interactant>
    <organismsDiffer>false</organismsDiffer>
    <experiments>3</experiments>
</comment>
<comment type="interaction">
    <interactant intactId="EBI-5644">
        <id>Q12389</id>
    </interactant>
    <interactant intactId="EBI-6951">
        <id>P38911</id>
        <label>FPR3</label>
    </interactant>
    <organismsDiffer>false</organismsDiffer>
    <experiments>3</experiments>
</comment>
<comment type="interaction">
    <interactant intactId="EBI-5644">
        <id>Q12389</id>
    </interactant>
    <interactant intactId="EBI-8170">
        <id>Q03532</id>
        <label>HAS1</label>
    </interactant>
    <organismsDiffer>false</organismsDiffer>
    <experiments>5</experiments>
</comment>
<comment type="interaction">
    <interactant intactId="EBI-5644">
        <id>Q12389</id>
    </interactant>
    <interactant intactId="EBI-22906">
        <id>P43586</id>
        <label>LOC1</label>
    </interactant>
    <organismsDiffer>false</organismsDiffer>
    <experiments>6</experiments>
</comment>
<comment type="interaction">
    <interactant intactId="EBI-5644">
        <id>Q12389</id>
    </interactant>
    <interactant intactId="EBI-10944">
        <id>Q12176</id>
        <label>MAK21</label>
    </interactant>
    <organismsDiffer>false</organismsDiffer>
    <experiments>3</experiments>
</comment>
<comment type="interaction">
    <interactant intactId="EBI-5644">
        <id>Q12389</id>
    </interactant>
    <interactant intactId="EBI-10394">
        <id>P38112</id>
        <label>MAK5</label>
    </interactant>
    <organismsDiffer>false</organismsDiffer>
    <experiments>3</experiments>
</comment>
<comment type="interaction">
    <interactant intactId="EBI-5644">
        <id>Q12389</id>
    </interactant>
    <interactant intactId="EBI-29259">
        <id>P39744</id>
        <label>NOC2</label>
    </interactant>
    <organismsDiffer>false</organismsDiffer>
    <experiments>6</experiments>
</comment>
<comment type="interaction">
    <interactant intactId="EBI-5644">
        <id>Q12389</id>
    </interactant>
    <interactant intactId="EBI-12105">
        <id>Q02892</id>
        <label>NOG1</label>
    </interactant>
    <organismsDiffer>false</organismsDiffer>
    <experiments>3</experiments>
</comment>
<comment type="interaction">
    <interactant intactId="EBI-5644">
        <id>Q12389</id>
    </interactant>
    <interactant intactId="EBI-35895">
        <id>Q08208</id>
        <label>NOP12</label>
    </interactant>
    <organismsDiffer>false</organismsDiffer>
    <experiments>3</experiments>
</comment>
<comment type="interaction">
    <interactant intactId="EBI-5644">
        <id>Q12389</id>
    </interactant>
    <interactant intactId="EBI-12122">
        <id>P37838</id>
        <label>NOP4</label>
    </interactant>
    <organismsDiffer>false</organismsDiffer>
    <experiments>4</experiments>
</comment>
<comment type="interaction">
    <interactant intactId="EBI-5644">
        <id>Q12389</id>
    </interactant>
    <interactant intactId="EBI-26762">
        <id>P36080</id>
        <label>RRP14</label>
    </interactant>
    <organismsDiffer>false</organismsDiffer>
    <experiments>3</experiments>
</comment>
<comment type="interaction">
    <interactant intactId="EBI-5644">
        <id>Q12389</id>
    </interactant>
    <interactant intactId="EBI-17814">
        <id>P25582</id>
        <label>SPB1</label>
    </interactant>
    <organismsDiffer>false</organismsDiffer>
    <experiments>3</experiments>
</comment>
<comment type="subcellular location">
    <subcellularLocation>
        <location evidence="4">Nucleus</location>
        <location evidence="4">Nucleolus</location>
    </subcellularLocation>
</comment>
<comment type="domain">
    <text>The Q motif is unique to and characteristic of the DEAD box family of RNA helicases and controls ATP binding and hydrolysis.</text>
</comment>
<comment type="similarity">
    <text evidence="6">Belongs to the DEAD box helicase family. DDX54/DBP10 subfamily.</text>
</comment>
<feature type="chain" id="PRO_0000055040" description="ATP-dependent RNA helicase DBP10">
    <location>
        <begin position="1"/>
        <end position="995"/>
    </location>
</feature>
<feature type="domain" description="Helicase ATP-binding" evidence="1">
    <location>
        <begin position="168"/>
        <end position="340"/>
    </location>
</feature>
<feature type="domain" description="Helicase C-terminal" evidence="2">
    <location>
        <begin position="418"/>
        <end position="568"/>
    </location>
</feature>
<feature type="region of interest" description="Disordered" evidence="3">
    <location>
        <begin position="1"/>
        <end position="120"/>
    </location>
</feature>
<feature type="region of interest" description="Disordered" evidence="3">
    <location>
        <begin position="389"/>
        <end position="427"/>
    </location>
</feature>
<feature type="region of interest" description="Disordered" evidence="3">
    <location>
        <begin position="889"/>
        <end position="973"/>
    </location>
</feature>
<feature type="short sequence motif" description="Q motif">
    <location>
        <begin position="137"/>
        <end position="165"/>
    </location>
</feature>
<feature type="short sequence motif" description="DEAD box">
    <location>
        <begin position="288"/>
        <end position="291"/>
    </location>
</feature>
<feature type="compositionally biased region" description="Acidic residues" evidence="3">
    <location>
        <begin position="12"/>
        <end position="25"/>
    </location>
</feature>
<feature type="compositionally biased region" description="Acidic residues" evidence="3">
    <location>
        <begin position="37"/>
        <end position="50"/>
    </location>
</feature>
<feature type="compositionally biased region" description="Basic and acidic residues" evidence="3">
    <location>
        <begin position="71"/>
        <end position="81"/>
    </location>
</feature>
<feature type="compositionally biased region" description="Basic residues" evidence="3">
    <location>
        <begin position="407"/>
        <end position="422"/>
    </location>
</feature>
<feature type="compositionally biased region" description="Basic residues" evidence="3">
    <location>
        <begin position="914"/>
        <end position="924"/>
    </location>
</feature>
<feature type="compositionally biased region" description="Basic and acidic residues" evidence="3">
    <location>
        <begin position="964"/>
        <end position="973"/>
    </location>
</feature>
<feature type="binding site" evidence="1">
    <location>
        <begin position="181"/>
        <end position="188"/>
    </location>
    <ligand>
        <name>ATP</name>
        <dbReference type="ChEBI" id="CHEBI:30616"/>
    </ligand>
</feature>
<feature type="modified residue" description="Phosphoserine" evidence="7 8 9">
    <location>
        <position position="101"/>
    </location>
</feature>
<feature type="modified residue" description="Phosphoserine" evidence="8">
    <location>
        <position position="398"/>
    </location>
</feature>
<feature type="modified residue" description="Phosphoserine" evidence="8">
    <location>
        <position position="400"/>
    </location>
</feature>
<feature type="sequence conflict" description="In Ref. 1; CAA96458 and 2; CAA98590." evidence="6" ref="1 2">
    <original>SHSIEDEIL</original>
    <variation>HILSKMKFW</variation>
    <location>
        <begin position="733"/>
        <end position="741"/>
    </location>
</feature>
<feature type="sequence conflict" description="In Ref. 1; CAA96458 and 2; CAA98590." evidence="6" ref="1 2">
    <original>G</original>
    <variation>V</variation>
    <location>
        <position position="746"/>
    </location>
</feature>
<feature type="sequence conflict" description="In Ref. 1; CAA96458 and 2; CAA98590." evidence="6" ref="1 2">
    <original>D</original>
    <variation>H</variation>
    <location>
        <position position="764"/>
    </location>
</feature>
<dbReference type="EC" id="3.6.4.13"/>
<dbReference type="EMBL" id="Z71781">
    <property type="protein sequence ID" value="CAA96458.1"/>
    <property type="molecule type" value="Genomic_DNA"/>
</dbReference>
<dbReference type="EMBL" id="Z74079">
    <property type="protein sequence ID" value="CAA98590.1"/>
    <property type="molecule type" value="Genomic_DNA"/>
</dbReference>
<dbReference type="EMBL" id="BK006938">
    <property type="protein sequence ID" value="DAA11821.2"/>
    <property type="molecule type" value="Genomic_DNA"/>
</dbReference>
<dbReference type="PIR" id="S67564">
    <property type="entry name" value="S67564"/>
</dbReference>
<dbReference type="RefSeq" id="NP_010253.2">
    <property type="nucleotide sequence ID" value="NM_001180090.2"/>
</dbReference>
<dbReference type="PDB" id="8V84">
    <property type="method" value="EM"/>
    <property type="resolution" value="2.70 A"/>
    <property type="chains" value="3=1-995"/>
</dbReference>
<dbReference type="PDB" id="8V85">
    <property type="method" value="EM"/>
    <property type="resolution" value="2.90 A"/>
    <property type="chains" value="3=1-995"/>
</dbReference>
<dbReference type="PDB" id="8V87">
    <property type="method" value="EM"/>
    <property type="resolution" value="2.66 A"/>
    <property type="chains" value="3=1-995"/>
</dbReference>
<dbReference type="PDBsum" id="8V84"/>
<dbReference type="PDBsum" id="8V85"/>
<dbReference type="PDBsum" id="8V87"/>
<dbReference type="EMDB" id="EMD-43021"/>
<dbReference type="EMDB" id="EMD-43023"/>
<dbReference type="EMDB" id="EMD-43027"/>
<dbReference type="SMR" id="Q12389"/>
<dbReference type="BioGRID" id="32025">
    <property type="interactions" value="802"/>
</dbReference>
<dbReference type="DIP" id="DIP-6387N"/>
<dbReference type="FunCoup" id="Q12389">
    <property type="interactions" value="1306"/>
</dbReference>
<dbReference type="IntAct" id="Q12389">
    <property type="interactions" value="58"/>
</dbReference>
<dbReference type="MINT" id="Q12389"/>
<dbReference type="STRING" id="4932.YDL031W"/>
<dbReference type="iPTMnet" id="Q12389"/>
<dbReference type="PaxDb" id="4932-YDL031W"/>
<dbReference type="PeptideAtlas" id="Q12389"/>
<dbReference type="EnsemblFungi" id="YDL031W_mRNA">
    <property type="protein sequence ID" value="YDL031W"/>
    <property type="gene ID" value="YDL031W"/>
</dbReference>
<dbReference type="GeneID" id="851530"/>
<dbReference type="KEGG" id="sce:YDL031W"/>
<dbReference type="AGR" id="SGD:S000002189"/>
<dbReference type="SGD" id="S000002189">
    <property type="gene designation" value="DBP10"/>
</dbReference>
<dbReference type="VEuPathDB" id="FungiDB:YDL031W"/>
<dbReference type="eggNOG" id="KOG0337">
    <property type="taxonomic scope" value="Eukaryota"/>
</dbReference>
<dbReference type="GeneTree" id="ENSGT00550000075100"/>
<dbReference type="HOGENOM" id="CLU_003041_5_2_1"/>
<dbReference type="InParanoid" id="Q12389"/>
<dbReference type="OMA" id="EDQFGMM"/>
<dbReference type="OrthoDB" id="10261375at2759"/>
<dbReference type="BioCyc" id="YEAST:G3O-29457-MONOMER"/>
<dbReference type="BioGRID-ORCS" id="851530">
    <property type="hits" value="0 hits in 10 CRISPR screens"/>
</dbReference>
<dbReference type="CD-CODE" id="BDAE0F88">
    <property type="entry name" value="Nucleolus"/>
</dbReference>
<dbReference type="PRO" id="PR:Q12389"/>
<dbReference type="Proteomes" id="UP000002311">
    <property type="component" value="Chromosome IV"/>
</dbReference>
<dbReference type="RNAct" id="Q12389">
    <property type="molecule type" value="protein"/>
</dbReference>
<dbReference type="GO" id="GO:0005730">
    <property type="term" value="C:nucleolus"/>
    <property type="evidence" value="ECO:0000314"/>
    <property type="project" value="SGD"/>
</dbReference>
<dbReference type="GO" id="GO:0030687">
    <property type="term" value="C:preribosome, large subunit precursor"/>
    <property type="evidence" value="ECO:0000316"/>
    <property type="project" value="SGD"/>
</dbReference>
<dbReference type="GO" id="GO:0005524">
    <property type="term" value="F:ATP binding"/>
    <property type="evidence" value="ECO:0007669"/>
    <property type="project" value="UniProtKB-KW"/>
</dbReference>
<dbReference type="GO" id="GO:0016887">
    <property type="term" value="F:ATP hydrolysis activity"/>
    <property type="evidence" value="ECO:0007669"/>
    <property type="project" value="RHEA"/>
</dbReference>
<dbReference type="GO" id="GO:0042802">
    <property type="term" value="F:identical protein binding"/>
    <property type="evidence" value="ECO:0000353"/>
    <property type="project" value="IntAct"/>
</dbReference>
<dbReference type="GO" id="GO:0003723">
    <property type="term" value="F:RNA binding"/>
    <property type="evidence" value="ECO:0007669"/>
    <property type="project" value="UniProtKB-KW"/>
</dbReference>
<dbReference type="GO" id="GO:0003724">
    <property type="term" value="F:RNA helicase activity"/>
    <property type="evidence" value="ECO:0000250"/>
    <property type="project" value="SGD"/>
</dbReference>
<dbReference type="GO" id="GO:1902626">
    <property type="term" value="P:assembly of large subunit precursor of preribosome"/>
    <property type="evidence" value="ECO:0000315"/>
    <property type="project" value="SGD"/>
</dbReference>
<dbReference type="GO" id="GO:0000466">
    <property type="term" value="P:maturation of 5.8S rRNA from tricistronic rRNA transcript (SSU-rRNA, 5.8S rRNA, LSU-rRNA)"/>
    <property type="evidence" value="ECO:0000315"/>
    <property type="project" value="SGD"/>
</dbReference>
<dbReference type="GO" id="GO:0000463">
    <property type="term" value="P:maturation of LSU-rRNA from tricistronic rRNA transcript (SSU-rRNA, 5.8S rRNA, LSU-rRNA)"/>
    <property type="evidence" value="ECO:0000315"/>
    <property type="project" value="SGD"/>
</dbReference>
<dbReference type="GO" id="GO:0006364">
    <property type="term" value="P:rRNA processing"/>
    <property type="evidence" value="ECO:0000318"/>
    <property type="project" value="GO_Central"/>
</dbReference>
<dbReference type="CDD" id="cd17959">
    <property type="entry name" value="DEADc_DDX54"/>
    <property type="match status" value="1"/>
</dbReference>
<dbReference type="CDD" id="cd18787">
    <property type="entry name" value="SF2_C_DEAD"/>
    <property type="match status" value="1"/>
</dbReference>
<dbReference type="FunFam" id="3.40.50.300:FF:000784">
    <property type="entry name" value="ATP-dependent RNA helicase DDX54"/>
    <property type="match status" value="1"/>
</dbReference>
<dbReference type="FunFam" id="3.40.50.300:FF:000865">
    <property type="entry name" value="ATP-dependent RNA helicase DDX54"/>
    <property type="match status" value="1"/>
</dbReference>
<dbReference type="Gene3D" id="3.40.50.300">
    <property type="entry name" value="P-loop containing nucleotide triphosphate hydrolases"/>
    <property type="match status" value="2"/>
</dbReference>
<dbReference type="InterPro" id="IPR012541">
    <property type="entry name" value="DBP10_C"/>
</dbReference>
<dbReference type="InterPro" id="IPR033517">
    <property type="entry name" value="DDX54/DBP10_DEAD-box_helicase"/>
</dbReference>
<dbReference type="InterPro" id="IPR011545">
    <property type="entry name" value="DEAD/DEAH_box_helicase_dom"/>
</dbReference>
<dbReference type="InterPro" id="IPR050079">
    <property type="entry name" value="DEAD_box_RNA_helicase"/>
</dbReference>
<dbReference type="InterPro" id="IPR014001">
    <property type="entry name" value="Helicase_ATP-bd"/>
</dbReference>
<dbReference type="InterPro" id="IPR001650">
    <property type="entry name" value="Helicase_C-like"/>
</dbReference>
<dbReference type="InterPro" id="IPR027417">
    <property type="entry name" value="P-loop_NTPase"/>
</dbReference>
<dbReference type="InterPro" id="IPR000629">
    <property type="entry name" value="RNA-helicase_DEAD-box_CS"/>
</dbReference>
<dbReference type="InterPro" id="IPR014014">
    <property type="entry name" value="RNA_helicase_DEAD_Q_motif"/>
</dbReference>
<dbReference type="PANTHER" id="PTHR47959">
    <property type="entry name" value="ATP-DEPENDENT RNA HELICASE RHLE-RELATED"/>
    <property type="match status" value="1"/>
</dbReference>
<dbReference type="PANTHER" id="PTHR47959:SF8">
    <property type="entry name" value="RNA HELICASE"/>
    <property type="match status" value="1"/>
</dbReference>
<dbReference type="Pfam" id="PF08147">
    <property type="entry name" value="DBP10CT"/>
    <property type="match status" value="1"/>
</dbReference>
<dbReference type="Pfam" id="PF00270">
    <property type="entry name" value="DEAD"/>
    <property type="match status" value="1"/>
</dbReference>
<dbReference type="Pfam" id="PF00271">
    <property type="entry name" value="Helicase_C"/>
    <property type="match status" value="1"/>
</dbReference>
<dbReference type="SMART" id="SM01123">
    <property type="entry name" value="DBP10CT"/>
    <property type="match status" value="1"/>
</dbReference>
<dbReference type="SMART" id="SM00487">
    <property type="entry name" value="DEXDc"/>
    <property type="match status" value="1"/>
</dbReference>
<dbReference type="SMART" id="SM00490">
    <property type="entry name" value="HELICc"/>
    <property type="match status" value="1"/>
</dbReference>
<dbReference type="SUPFAM" id="SSF52540">
    <property type="entry name" value="P-loop containing nucleoside triphosphate hydrolases"/>
    <property type="match status" value="2"/>
</dbReference>
<dbReference type="PROSITE" id="PS00039">
    <property type="entry name" value="DEAD_ATP_HELICASE"/>
    <property type="match status" value="1"/>
</dbReference>
<dbReference type="PROSITE" id="PS51192">
    <property type="entry name" value="HELICASE_ATP_BIND_1"/>
    <property type="match status" value="1"/>
</dbReference>
<dbReference type="PROSITE" id="PS51194">
    <property type="entry name" value="HELICASE_CTER"/>
    <property type="match status" value="1"/>
</dbReference>
<dbReference type="PROSITE" id="PS51195">
    <property type="entry name" value="Q_MOTIF"/>
    <property type="match status" value="1"/>
</dbReference>